<dbReference type="EC" id="1.1.1.408" evidence="2"/>
<dbReference type="EMBL" id="AM412317">
    <property type="protein sequence ID" value="CAL83749.1"/>
    <property type="molecule type" value="Genomic_DNA"/>
</dbReference>
<dbReference type="RefSeq" id="YP_001254702.1">
    <property type="nucleotide sequence ID" value="NC_009495.1"/>
</dbReference>
<dbReference type="SMR" id="A5I3X9"/>
<dbReference type="GeneID" id="5186463"/>
<dbReference type="KEGG" id="cbo:CBO2208"/>
<dbReference type="PATRIC" id="fig|413999.7.peg.2176"/>
<dbReference type="HOGENOM" id="CLU_040168_0_1_9"/>
<dbReference type="Proteomes" id="UP000001986">
    <property type="component" value="Chromosome"/>
</dbReference>
<dbReference type="GO" id="GO:0046872">
    <property type="term" value="F:metal ion binding"/>
    <property type="evidence" value="ECO:0007669"/>
    <property type="project" value="UniProtKB-KW"/>
</dbReference>
<dbReference type="GO" id="GO:0051287">
    <property type="term" value="F:NAD binding"/>
    <property type="evidence" value="ECO:0007669"/>
    <property type="project" value="InterPro"/>
</dbReference>
<dbReference type="GO" id="GO:0016491">
    <property type="term" value="F:oxidoreductase activity"/>
    <property type="evidence" value="ECO:0007669"/>
    <property type="project" value="UniProtKB-KW"/>
</dbReference>
<dbReference type="Gene3D" id="3.40.718.10">
    <property type="entry name" value="Isopropylmalate Dehydrogenase"/>
    <property type="match status" value="1"/>
</dbReference>
<dbReference type="InterPro" id="IPR005255">
    <property type="entry name" value="PdxA_fam"/>
</dbReference>
<dbReference type="NCBIfam" id="TIGR00557">
    <property type="entry name" value="pdxA"/>
    <property type="match status" value="1"/>
</dbReference>
<dbReference type="NCBIfam" id="NF002992">
    <property type="entry name" value="PRK03743.1"/>
    <property type="match status" value="1"/>
</dbReference>
<dbReference type="PANTHER" id="PTHR30004">
    <property type="entry name" value="4-HYDROXYTHREONINE-4-PHOSPHATE DEHYDROGENASE"/>
    <property type="match status" value="1"/>
</dbReference>
<dbReference type="PANTHER" id="PTHR30004:SF6">
    <property type="entry name" value="D-THREONATE 4-PHOSPHATE DEHYDROGENASE"/>
    <property type="match status" value="1"/>
</dbReference>
<dbReference type="Pfam" id="PF04166">
    <property type="entry name" value="PdxA"/>
    <property type="match status" value="1"/>
</dbReference>
<dbReference type="SUPFAM" id="SSF53659">
    <property type="entry name" value="Isocitrate/Isopropylmalate dehydrogenase-like"/>
    <property type="match status" value="1"/>
</dbReference>
<gene>
    <name type="ordered locus">CBO2208</name>
</gene>
<organism>
    <name type="scientific">Clostridium botulinum (strain Hall / ATCC 3502 / NCTC 13319 / Type A)</name>
    <dbReference type="NCBI Taxonomy" id="441771"/>
    <lineage>
        <taxon>Bacteria</taxon>
        <taxon>Bacillati</taxon>
        <taxon>Bacillota</taxon>
        <taxon>Clostridia</taxon>
        <taxon>Eubacteriales</taxon>
        <taxon>Clostridiaceae</taxon>
        <taxon>Clostridium</taxon>
    </lineage>
</organism>
<keyword id="KW-0119">Carbohydrate metabolism</keyword>
<keyword id="KW-0479">Metal-binding</keyword>
<keyword id="KW-0520">NAD</keyword>
<keyword id="KW-0560">Oxidoreductase</keyword>
<keyword id="KW-1185">Reference proteome</keyword>
<reference key="1">
    <citation type="journal article" date="2007" name="Genome Res.">
        <title>Genome sequence of a proteolytic (Group I) Clostridium botulinum strain Hall A and comparative analysis of the clostridial genomes.</title>
        <authorList>
            <person name="Sebaihia M."/>
            <person name="Peck M.W."/>
            <person name="Minton N.P."/>
            <person name="Thomson N.R."/>
            <person name="Holden M.T.G."/>
            <person name="Mitchell W.J."/>
            <person name="Carter A.T."/>
            <person name="Bentley S.D."/>
            <person name="Mason D.R."/>
            <person name="Crossman L."/>
            <person name="Paul C.J."/>
            <person name="Ivens A."/>
            <person name="Wells-Bennik M.H.J."/>
            <person name="Davis I.J."/>
            <person name="Cerdeno-Tarraga A.M."/>
            <person name="Churcher C."/>
            <person name="Quail M.A."/>
            <person name="Chillingworth T."/>
            <person name="Feltwell T."/>
            <person name="Fraser A."/>
            <person name="Goodhead I."/>
            <person name="Hance Z."/>
            <person name="Jagels K."/>
            <person name="Larke N."/>
            <person name="Maddison M."/>
            <person name="Moule S."/>
            <person name="Mungall K."/>
            <person name="Norbertczak H."/>
            <person name="Rabbinowitsch E."/>
            <person name="Sanders M."/>
            <person name="Simmonds M."/>
            <person name="White B."/>
            <person name="Whithead S."/>
            <person name="Parkhill J."/>
        </authorList>
    </citation>
    <scope>NUCLEOTIDE SEQUENCE [LARGE SCALE GENOMIC DNA]</scope>
    <source>
        <strain>Hall / ATCC 3502 / NCTC 13319 / Type A</strain>
    </source>
</reference>
<evidence type="ECO:0000250" key="1">
    <source>
        <dbReference type="UniProtKB" id="P19624"/>
    </source>
</evidence>
<evidence type="ECO:0000250" key="2">
    <source>
        <dbReference type="UniProtKB" id="P58718"/>
    </source>
</evidence>
<evidence type="ECO:0000305" key="3"/>
<feature type="chain" id="PRO_1000051498" description="Putative D-threonate 4-phosphate dehydrogenase">
    <location>
        <begin position="1"/>
        <end position="334"/>
    </location>
</feature>
<feature type="binding site" evidence="1">
    <location>
        <position position="141"/>
    </location>
    <ligand>
        <name>substrate</name>
    </ligand>
</feature>
<feature type="binding site" evidence="1">
    <location>
        <position position="142"/>
    </location>
    <ligand>
        <name>substrate</name>
    </ligand>
</feature>
<feature type="binding site" evidence="1">
    <location>
        <position position="171"/>
    </location>
    <ligand>
        <name>a divalent metal cation</name>
        <dbReference type="ChEBI" id="CHEBI:60240"/>
        <note>ligand shared between dimeric partners</note>
    </ligand>
</feature>
<feature type="binding site" evidence="1">
    <location>
        <position position="215"/>
    </location>
    <ligand>
        <name>a divalent metal cation</name>
        <dbReference type="ChEBI" id="CHEBI:60240"/>
        <note>ligand shared between dimeric partners</note>
    </ligand>
</feature>
<feature type="binding site" evidence="1">
    <location>
        <position position="270"/>
    </location>
    <ligand>
        <name>a divalent metal cation</name>
        <dbReference type="ChEBI" id="CHEBI:60240"/>
        <note>ligand shared between dimeric partners</note>
    </ligand>
</feature>
<feature type="binding site" evidence="1">
    <location>
        <position position="278"/>
    </location>
    <ligand>
        <name>substrate</name>
    </ligand>
</feature>
<feature type="binding site" evidence="1">
    <location>
        <position position="296"/>
    </location>
    <ligand>
        <name>substrate</name>
    </ligand>
</feature>
<sequence length="334" mass="36273">MINNKPIIGIPIGDPAGVGPEIVVKSLTEAEVYEKCNPILIGDAKVIKQAMGFCNVNLNINSIKKADEGKFTLGTIDLIDLNNIDIDELKIGKVQGIAGKAAFEYIKKSVEMAKEGELDAIATTPINKESLREGNVNYIGHTEILADLTDTEDPLTMFEVRGMRVFFLTRHVSLRKACDLVTKERVLDYIIRCSEALEKLGVKDGKMAVAGLNPHSGEHGLFGDEEMKAVVPAIEEAQKMGYKVEGPIGADSVFHLALKGRYNSVLSLYHDQGHIATKTLDFERTIAVTNGMPILRTSVDHGTAFDIAGTGQASSVSMVEAIILAAKYSPKFKK</sequence>
<name>PDXA2_CLOBH</name>
<protein>
    <recommendedName>
        <fullName evidence="2">Putative D-threonate 4-phosphate dehydrogenase</fullName>
        <ecNumber evidence="2">1.1.1.408</ecNumber>
    </recommendedName>
</protein>
<accession>A5I3X9</accession>
<comment type="function">
    <text evidence="2">Catalyzes the NAD-dependent oxidation and subsequent decarboxylation of D-threonate 4-phosphate to produce dihydroxyacetone phosphate (DHAP).</text>
</comment>
<comment type="catalytic activity">
    <reaction evidence="2">
        <text>4-O-phospho-D-threonate + NAD(+) = dihydroxyacetone phosphate + CO2 + NADH</text>
        <dbReference type="Rhea" id="RHEA:52396"/>
        <dbReference type="ChEBI" id="CHEBI:16526"/>
        <dbReference type="ChEBI" id="CHEBI:57540"/>
        <dbReference type="ChEBI" id="CHEBI:57642"/>
        <dbReference type="ChEBI" id="CHEBI:57945"/>
        <dbReference type="ChEBI" id="CHEBI:136590"/>
        <dbReference type="EC" id="1.1.1.408"/>
    </reaction>
</comment>
<comment type="cofactor">
    <cofactor evidence="1">
        <name>a divalent metal cation</name>
        <dbReference type="ChEBI" id="CHEBI:60240"/>
    </cofactor>
    <text evidence="1">Binds 1 divalent metal cation per subunit.</text>
</comment>
<comment type="subunit">
    <text evidence="2">Homodimer.</text>
</comment>
<comment type="similarity">
    <text evidence="3">Belongs to the PdxA family. PdxA2 subfamily.</text>
</comment>
<proteinExistence type="inferred from homology"/>